<keyword id="KW-0378">Hydrolase</keyword>
<gene>
    <name evidence="1" type="primary">rppH</name>
    <name evidence="1" type="synonym">nudH</name>
    <name type="ordered locus">BURPS1710b_3519</name>
</gene>
<name>RPPH_BURP1</name>
<evidence type="ECO:0000255" key="1">
    <source>
        <dbReference type="HAMAP-Rule" id="MF_00298"/>
    </source>
</evidence>
<evidence type="ECO:0000256" key="2">
    <source>
        <dbReference type="SAM" id="MobiDB-lite"/>
    </source>
</evidence>
<reference key="1">
    <citation type="journal article" date="2010" name="Genome Biol. Evol.">
        <title>Continuing evolution of Burkholderia mallei through genome reduction and large-scale rearrangements.</title>
        <authorList>
            <person name="Losada L."/>
            <person name="Ronning C.M."/>
            <person name="DeShazer D."/>
            <person name="Woods D."/>
            <person name="Fedorova N."/>
            <person name="Kim H.S."/>
            <person name="Shabalina S.A."/>
            <person name="Pearson T.R."/>
            <person name="Brinkac L."/>
            <person name="Tan P."/>
            <person name="Nandi T."/>
            <person name="Crabtree J."/>
            <person name="Badger J."/>
            <person name="Beckstrom-Sternberg S."/>
            <person name="Saqib M."/>
            <person name="Schutzer S.E."/>
            <person name="Keim P."/>
            <person name="Nierman W.C."/>
        </authorList>
    </citation>
    <scope>NUCLEOTIDE SEQUENCE [LARGE SCALE GENOMIC DNA]</scope>
    <source>
        <strain>1710b</strain>
    </source>
</reference>
<sequence>MLDREGFRPNVGIILLNAHNEVFWGKRLREHSWQFPQGGIKYGETPMQAMYRELHEETGLLPEHVKIIGRTRDWLRYEVPDKFIKREVRGHYRGQKQIWFLLRMVGRDCDICLRATDHPEFDAWRWNEYWVPLDAVIEFKRDVYQLALTELSRFLRRPAQRTDKSRGPRAPRYPRVANGHAASEAPAAIDTSAVCSEVEPGANALDETPPRVSLRD</sequence>
<comment type="function">
    <text evidence="1">Accelerates the degradation of transcripts by removing pyrophosphate from the 5'-end of triphosphorylated RNA, leading to a more labile monophosphorylated state that can stimulate subsequent ribonuclease cleavage.</text>
</comment>
<comment type="cofactor">
    <cofactor evidence="1">
        <name>a divalent metal cation</name>
        <dbReference type="ChEBI" id="CHEBI:60240"/>
    </cofactor>
</comment>
<comment type="similarity">
    <text evidence="1">Belongs to the Nudix hydrolase family. RppH subfamily.</text>
</comment>
<proteinExistence type="inferred from homology"/>
<protein>
    <recommendedName>
        <fullName evidence="1">RNA pyrophosphohydrolase</fullName>
        <ecNumber evidence="1">3.6.1.-</ecNumber>
    </recommendedName>
    <alternativeName>
        <fullName evidence="1">(Di)nucleoside polyphosphate hydrolase</fullName>
    </alternativeName>
</protein>
<feature type="chain" id="PRO_0000231903" description="RNA pyrophosphohydrolase">
    <location>
        <begin position="1"/>
        <end position="216"/>
    </location>
</feature>
<feature type="domain" description="Nudix hydrolase" evidence="1">
    <location>
        <begin position="6"/>
        <end position="149"/>
    </location>
</feature>
<feature type="region of interest" description="Disordered" evidence="2">
    <location>
        <begin position="159"/>
        <end position="188"/>
    </location>
</feature>
<feature type="short sequence motif" description="Nudix box">
    <location>
        <begin position="38"/>
        <end position="59"/>
    </location>
</feature>
<dbReference type="EC" id="3.6.1.-" evidence="1"/>
<dbReference type="EMBL" id="CP000124">
    <property type="protein sequence ID" value="ABA50396.1"/>
    <property type="molecule type" value="Genomic_DNA"/>
</dbReference>
<dbReference type="RefSeq" id="WP_004194263.1">
    <property type="nucleotide sequence ID" value="NC_007434.1"/>
</dbReference>
<dbReference type="SMR" id="Q3JNG3"/>
<dbReference type="EnsemblBacteria" id="ABA50396">
    <property type="protein sequence ID" value="ABA50396"/>
    <property type="gene ID" value="BURPS1710b_3519"/>
</dbReference>
<dbReference type="KEGG" id="bpm:BURPS1710b_3519"/>
<dbReference type="HOGENOM" id="CLU_087195_0_1_4"/>
<dbReference type="Proteomes" id="UP000002700">
    <property type="component" value="Chromosome I"/>
</dbReference>
<dbReference type="GO" id="GO:0016462">
    <property type="term" value="F:pyrophosphatase activity"/>
    <property type="evidence" value="ECO:0007669"/>
    <property type="project" value="UniProtKB-ARBA"/>
</dbReference>
<dbReference type="CDD" id="cd03671">
    <property type="entry name" value="NUDIX_Ap4A_hydrolase_plant_like"/>
    <property type="match status" value="1"/>
</dbReference>
<dbReference type="Gene3D" id="3.90.79.10">
    <property type="entry name" value="Nucleoside Triphosphate Pyrophosphohydrolase"/>
    <property type="match status" value="1"/>
</dbReference>
<dbReference type="HAMAP" id="MF_00298">
    <property type="entry name" value="Nudix_RppH"/>
    <property type="match status" value="1"/>
</dbReference>
<dbReference type="InterPro" id="IPR020476">
    <property type="entry name" value="Nudix_hydrolase"/>
</dbReference>
<dbReference type="InterPro" id="IPR015797">
    <property type="entry name" value="NUDIX_hydrolase-like_dom_sf"/>
</dbReference>
<dbReference type="InterPro" id="IPR020084">
    <property type="entry name" value="NUDIX_hydrolase_CS"/>
</dbReference>
<dbReference type="InterPro" id="IPR000086">
    <property type="entry name" value="NUDIX_hydrolase_dom"/>
</dbReference>
<dbReference type="InterPro" id="IPR022927">
    <property type="entry name" value="RppH"/>
</dbReference>
<dbReference type="NCBIfam" id="NF001935">
    <property type="entry name" value="PRK00714.1-2"/>
    <property type="match status" value="1"/>
</dbReference>
<dbReference type="NCBIfam" id="NF001937">
    <property type="entry name" value="PRK00714.1-4"/>
    <property type="match status" value="1"/>
</dbReference>
<dbReference type="NCBIfam" id="NF001938">
    <property type="entry name" value="PRK00714.1-5"/>
    <property type="match status" value="1"/>
</dbReference>
<dbReference type="PANTHER" id="PTHR43736">
    <property type="entry name" value="ADP-RIBOSE PYROPHOSPHATASE"/>
    <property type="match status" value="1"/>
</dbReference>
<dbReference type="PANTHER" id="PTHR43736:SF1">
    <property type="entry name" value="DIHYDRONEOPTERIN TRIPHOSPHATE DIPHOSPHATASE"/>
    <property type="match status" value="1"/>
</dbReference>
<dbReference type="Pfam" id="PF00293">
    <property type="entry name" value="NUDIX"/>
    <property type="match status" value="1"/>
</dbReference>
<dbReference type="PRINTS" id="PR00502">
    <property type="entry name" value="NUDIXFAMILY"/>
</dbReference>
<dbReference type="SUPFAM" id="SSF55811">
    <property type="entry name" value="Nudix"/>
    <property type="match status" value="1"/>
</dbReference>
<dbReference type="PROSITE" id="PS51462">
    <property type="entry name" value="NUDIX"/>
    <property type="match status" value="1"/>
</dbReference>
<dbReference type="PROSITE" id="PS00893">
    <property type="entry name" value="NUDIX_BOX"/>
    <property type="match status" value="1"/>
</dbReference>
<organism>
    <name type="scientific">Burkholderia pseudomallei (strain 1710b)</name>
    <dbReference type="NCBI Taxonomy" id="320372"/>
    <lineage>
        <taxon>Bacteria</taxon>
        <taxon>Pseudomonadati</taxon>
        <taxon>Pseudomonadota</taxon>
        <taxon>Betaproteobacteria</taxon>
        <taxon>Burkholderiales</taxon>
        <taxon>Burkholderiaceae</taxon>
        <taxon>Burkholderia</taxon>
        <taxon>pseudomallei group</taxon>
    </lineage>
</organism>
<accession>Q3JNG3</accession>